<organism>
    <name type="scientific">Streptococcus pyogenes serotype M6 (strain ATCC BAA-946 / MGAS10394)</name>
    <dbReference type="NCBI Taxonomy" id="286636"/>
    <lineage>
        <taxon>Bacteria</taxon>
        <taxon>Bacillati</taxon>
        <taxon>Bacillota</taxon>
        <taxon>Bacilli</taxon>
        <taxon>Lactobacillales</taxon>
        <taxon>Streptococcaceae</taxon>
        <taxon>Streptococcus</taxon>
    </lineage>
</organism>
<sequence>MTFYDHTAIEPKWQAFWADNHTFKTGTDASKPKFYALDMFPYPSGAGLHVGHPEGYTATDILSRFKRAQGHNVLHPMGWDAFGLPAEQYAMDTGNDPAEFTAENIANFKRQINALGFSYDWDREVNTTDPNYYKWTQWIFTKLYEKGLAYEAEVPVNWVEELGTAIANEEVLPDGTSERGGYPVVRKPMRQWMLKITAYAERLLEDLEEVDWPESIKDMQRNWIGKSTGANVTFKVKDTDKDFTVFTTRPDTLFGATYAVLAPEHALVDAITTADQAEAVADYKRQASLKSDLARTDLAKEKTGVWTGSYAINPVNGNEMPVWIADYVLASYGTGAIMAVPAHDERDWEFAKQFNLDIIPVLEGGNVEEAAFTEDGLHINSGFLDGLDKASAIAKMVEWLEAEGVGNEKVTYRLRDWLFSRQRYWGEPIPIIHWEDGTSTAVPESELPLVLPVTKDIRPSGTGESPLANVTDWLEVTREDGVKGRRETNTMPQWAGSSWYYLRYIDPHNTEKLADEELLKQWLPVDIYVGGAEHAVLHLLYARFWHKVLYDLGVVPTKEPFQKLFNQGMILGTSYRDSRGALVATDKVEKRDGSFFHVETGEELEQAPAKMSKSLKNVVNPDDVVEQYGADTLRVYEMFMGPLDASIAWSEEGLEGSRKFLDRVYRLITTKEITEENSGALDKVYNETVKAVTEQVDQMKFNTAIAQLMVFVNAANKEDKLFSDYAKGFVQLIAPFAPHLGEELWQALTASGESISYVPWPSYDKSKLVENDVEIVVQIKGKVKAKLVVAKDLSREELQEVALANEKVQAEITGKDIIKVIAVPNKLVNIVIK</sequence>
<protein>
    <recommendedName>
        <fullName evidence="1">Leucine--tRNA ligase</fullName>
        <ecNumber evidence="1">6.1.1.4</ecNumber>
    </recommendedName>
    <alternativeName>
        <fullName evidence="1">Leucyl-tRNA synthetase</fullName>
        <shortName evidence="1">LeuRS</shortName>
    </alternativeName>
</protein>
<evidence type="ECO:0000255" key="1">
    <source>
        <dbReference type="HAMAP-Rule" id="MF_00049"/>
    </source>
</evidence>
<name>SYL_STRP6</name>
<feature type="chain" id="PRO_0000152099" description="Leucine--tRNA ligase">
    <location>
        <begin position="1"/>
        <end position="833"/>
    </location>
</feature>
<feature type="short sequence motif" description="'HIGH' region">
    <location>
        <begin position="41"/>
        <end position="52"/>
    </location>
</feature>
<feature type="short sequence motif" description="'KMSKS' region">
    <location>
        <begin position="610"/>
        <end position="614"/>
    </location>
</feature>
<feature type="binding site" evidence="1">
    <location>
        <position position="613"/>
    </location>
    <ligand>
        <name>ATP</name>
        <dbReference type="ChEBI" id="CHEBI:30616"/>
    </ligand>
</feature>
<comment type="catalytic activity">
    <reaction evidence="1">
        <text>tRNA(Leu) + L-leucine + ATP = L-leucyl-tRNA(Leu) + AMP + diphosphate</text>
        <dbReference type="Rhea" id="RHEA:11688"/>
        <dbReference type="Rhea" id="RHEA-COMP:9613"/>
        <dbReference type="Rhea" id="RHEA-COMP:9622"/>
        <dbReference type="ChEBI" id="CHEBI:30616"/>
        <dbReference type="ChEBI" id="CHEBI:33019"/>
        <dbReference type="ChEBI" id="CHEBI:57427"/>
        <dbReference type="ChEBI" id="CHEBI:78442"/>
        <dbReference type="ChEBI" id="CHEBI:78494"/>
        <dbReference type="ChEBI" id="CHEBI:456215"/>
        <dbReference type="EC" id="6.1.1.4"/>
    </reaction>
</comment>
<comment type="subcellular location">
    <subcellularLocation>
        <location evidence="1">Cytoplasm</location>
    </subcellularLocation>
</comment>
<comment type="similarity">
    <text evidence="1">Belongs to the class-I aminoacyl-tRNA synthetase family.</text>
</comment>
<proteinExistence type="inferred from homology"/>
<gene>
    <name evidence="1" type="primary">leuS</name>
    <name type="ordered locus">M6_Spy0193</name>
</gene>
<accession>Q5XE35</accession>
<dbReference type="EC" id="6.1.1.4" evidence="1"/>
<dbReference type="EMBL" id="CP000003">
    <property type="protein sequence ID" value="AAT86328.1"/>
    <property type="molecule type" value="Genomic_DNA"/>
</dbReference>
<dbReference type="RefSeq" id="WP_011184123.1">
    <property type="nucleotide sequence ID" value="NC_006086.1"/>
</dbReference>
<dbReference type="SMR" id="Q5XE35"/>
<dbReference type="KEGG" id="spa:M6_Spy0193"/>
<dbReference type="HOGENOM" id="CLU_004427_0_0_9"/>
<dbReference type="Proteomes" id="UP000001167">
    <property type="component" value="Chromosome"/>
</dbReference>
<dbReference type="GO" id="GO:0005829">
    <property type="term" value="C:cytosol"/>
    <property type="evidence" value="ECO:0007669"/>
    <property type="project" value="TreeGrafter"/>
</dbReference>
<dbReference type="GO" id="GO:0002161">
    <property type="term" value="F:aminoacyl-tRNA deacylase activity"/>
    <property type="evidence" value="ECO:0007669"/>
    <property type="project" value="InterPro"/>
</dbReference>
<dbReference type="GO" id="GO:0005524">
    <property type="term" value="F:ATP binding"/>
    <property type="evidence" value="ECO:0007669"/>
    <property type="project" value="UniProtKB-UniRule"/>
</dbReference>
<dbReference type="GO" id="GO:0004823">
    <property type="term" value="F:leucine-tRNA ligase activity"/>
    <property type="evidence" value="ECO:0007669"/>
    <property type="project" value="UniProtKB-UniRule"/>
</dbReference>
<dbReference type="GO" id="GO:0006429">
    <property type="term" value="P:leucyl-tRNA aminoacylation"/>
    <property type="evidence" value="ECO:0007669"/>
    <property type="project" value="UniProtKB-UniRule"/>
</dbReference>
<dbReference type="CDD" id="cd07958">
    <property type="entry name" value="Anticodon_Ia_Leu_BEm"/>
    <property type="match status" value="1"/>
</dbReference>
<dbReference type="CDD" id="cd00812">
    <property type="entry name" value="LeuRS_core"/>
    <property type="match status" value="1"/>
</dbReference>
<dbReference type="FunFam" id="1.10.730.10:FF:000012">
    <property type="entry name" value="Leucine--tRNA ligase"/>
    <property type="match status" value="1"/>
</dbReference>
<dbReference type="FunFam" id="3.40.50.620:FF:000056">
    <property type="entry name" value="Leucine--tRNA ligase"/>
    <property type="match status" value="1"/>
</dbReference>
<dbReference type="FunFam" id="3.40.50.620:FF:000077">
    <property type="entry name" value="Leucine--tRNA ligase"/>
    <property type="match status" value="1"/>
</dbReference>
<dbReference type="FunFam" id="1.10.730.10:FF:000011">
    <property type="entry name" value="Leucine--tRNA ligase chloroplastic/mitochondrial"/>
    <property type="match status" value="1"/>
</dbReference>
<dbReference type="Gene3D" id="3.40.50.620">
    <property type="entry name" value="HUPs"/>
    <property type="match status" value="2"/>
</dbReference>
<dbReference type="Gene3D" id="1.10.730.10">
    <property type="entry name" value="Isoleucyl-tRNA Synthetase, Domain 1"/>
    <property type="match status" value="1"/>
</dbReference>
<dbReference type="Gene3D" id="3.90.740.10">
    <property type="entry name" value="Valyl/Leucyl/Isoleucyl-tRNA synthetase, editing domain"/>
    <property type="match status" value="1"/>
</dbReference>
<dbReference type="HAMAP" id="MF_00049_B">
    <property type="entry name" value="Leu_tRNA_synth_B"/>
    <property type="match status" value="1"/>
</dbReference>
<dbReference type="InterPro" id="IPR001412">
    <property type="entry name" value="aa-tRNA-synth_I_CS"/>
</dbReference>
<dbReference type="InterPro" id="IPR002300">
    <property type="entry name" value="aa-tRNA-synth_Ia"/>
</dbReference>
<dbReference type="InterPro" id="IPR002302">
    <property type="entry name" value="Leu-tRNA-ligase"/>
</dbReference>
<dbReference type="InterPro" id="IPR025709">
    <property type="entry name" value="Leu_tRNA-synth_edit"/>
</dbReference>
<dbReference type="InterPro" id="IPR013155">
    <property type="entry name" value="M/V/L/I-tRNA-synth_anticd-bd"/>
</dbReference>
<dbReference type="InterPro" id="IPR015413">
    <property type="entry name" value="Methionyl/Leucyl_tRNA_Synth"/>
</dbReference>
<dbReference type="InterPro" id="IPR014729">
    <property type="entry name" value="Rossmann-like_a/b/a_fold"/>
</dbReference>
<dbReference type="InterPro" id="IPR009080">
    <property type="entry name" value="tRNAsynth_Ia_anticodon-bd"/>
</dbReference>
<dbReference type="InterPro" id="IPR009008">
    <property type="entry name" value="Val/Leu/Ile-tRNA-synth_edit"/>
</dbReference>
<dbReference type="NCBIfam" id="TIGR00396">
    <property type="entry name" value="leuS_bact"/>
    <property type="match status" value="1"/>
</dbReference>
<dbReference type="PANTHER" id="PTHR43740:SF2">
    <property type="entry name" value="LEUCINE--TRNA LIGASE, MITOCHONDRIAL"/>
    <property type="match status" value="1"/>
</dbReference>
<dbReference type="PANTHER" id="PTHR43740">
    <property type="entry name" value="LEUCYL-TRNA SYNTHETASE"/>
    <property type="match status" value="1"/>
</dbReference>
<dbReference type="Pfam" id="PF08264">
    <property type="entry name" value="Anticodon_1"/>
    <property type="match status" value="1"/>
</dbReference>
<dbReference type="Pfam" id="PF00133">
    <property type="entry name" value="tRNA-synt_1"/>
    <property type="match status" value="2"/>
</dbReference>
<dbReference type="Pfam" id="PF13603">
    <property type="entry name" value="tRNA-synt_1_2"/>
    <property type="match status" value="1"/>
</dbReference>
<dbReference type="Pfam" id="PF09334">
    <property type="entry name" value="tRNA-synt_1g"/>
    <property type="match status" value="1"/>
</dbReference>
<dbReference type="PRINTS" id="PR00985">
    <property type="entry name" value="TRNASYNTHLEU"/>
</dbReference>
<dbReference type="SUPFAM" id="SSF47323">
    <property type="entry name" value="Anticodon-binding domain of a subclass of class I aminoacyl-tRNA synthetases"/>
    <property type="match status" value="1"/>
</dbReference>
<dbReference type="SUPFAM" id="SSF52374">
    <property type="entry name" value="Nucleotidylyl transferase"/>
    <property type="match status" value="1"/>
</dbReference>
<dbReference type="SUPFAM" id="SSF50677">
    <property type="entry name" value="ValRS/IleRS/LeuRS editing domain"/>
    <property type="match status" value="1"/>
</dbReference>
<dbReference type="PROSITE" id="PS00178">
    <property type="entry name" value="AA_TRNA_LIGASE_I"/>
    <property type="match status" value="1"/>
</dbReference>
<reference key="1">
    <citation type="journal article" date="2004" name="J. Infect. Dis.">
        <title>Progress toward characterization of the group A Streptococcus metagenome: complete genome sequence of a macrolide-resistant serotype M6 strain.</title>
        <authorList>
            <person name="Banks D.J."/>
            <person name="Porcella S.F."/>
            <person name="Barbian K.D."/>
            <person name="Beres S.B."/>
            <person name="Philips L.E."/>
            <person name="Voyich J.M."/>
            <person name="DeLeo F.R."/>
            <person name="Martin J.M."/>
            <person name="Somerville G.A."/>
            <person name="Musser J.M."/>
        </authorList>
    </citation>
    <scope>NUCLEOTIDE SEQUENCE [LARGE SCALE GENOMIC DNA]</scope>
    <source>
        <strain>ATCC BAA-946 / MGAS10394</strain>
    </source>
</reference>
<keyword id="KW-0030">Aminoacyl-tRNA synthetase</keyword>
<keyword id="KW-0067">ATP-binding</keyword>
<keyword id="KW-0963">Cytoplasm</keyword>
<keyword id="KW-0436">Ligase</keyword>
<keyword id="KW-0547">Nucleotide-binding</keyword>
<keyword id="KW-0648">Protein biosynthesis</keyword>